<accession>P57858</accession>
<proteinExistence type="inferred from homology"/>
<keyword id="KW-1003">Cell membrane</keyword>
<keyword id="KW-0285">Flavoprotein</keyword>
<keyword id="KW-0288">FMN</keyword>
<keyword id="KW-0472">Membrane</keyword>
<keyword id="KW-0560">Oxidoreductase</keyword>
<keyword id="KW-0665">Pyrimidine biosynthesis</keyword>
<keyword id="KW-1185">Reference proteome</keyword>
<name>PYRD_PASMU</name>
<dbReference type="EC" id="1.3.5.2"/>
<dbReference type="EMBL" id="AE004439">
    <property type="protein sequence ID" value="AAK02701.1"/>
    <property type="molecule type" value="Genomic_DNA"/>
</dbReference>
<dbReference type="RefSeq" id="WP_010906756.1">
    <property type="nucleotide sequence ID" value="NC_002663.1"/>
</dbReference>
<dbReference type="SMR" id="P57858"/>
<dbReference type="STRING" id="272843.PM0617"/>
<dbReference type="EnsemblBacteria" id="AAK02701">
    <property type="protein sequence ID" value="AAK02701"/>
    <property type="gene ID" value="PM0617"/>
</dbReference>
<dbReference type="KEGG" id="pmu:PM0617"/>
<dbReference type="PATRIC" id="fig|272843.6.peg.625"/>
<dbReference type="HOGENOM" id="CLU_013640_2_0_6"/>
<dbReference type="OrthoDB" id="9802377at2"/>
<dbReference type="UniPathway" id="UPA00070">
    <property type="reaction ID" value="UER00946"/>
</dbReference>
<dbReference type="Proteomes" id="UP000000809">
    <property type="component" value="Chromosome"/>
</dbReference>
<dbReference type="GO" id="GO:0005737">
    <property type="term" value="C:cytoplasm"/>
    <property type="evidence" value="ECO:0007669"/>
    <property type="project" value="InterPro"/>
</dbReference>
<dbReference type="GO" id="GO:0005886">
    <property type="term" value="C:plasma membrane"/>
    <property type="evidence" value="ECO:0007669"/>
    <property type="project" value="UniProtKB-SubCell"/>
</dbReference>
<dbReference type="GO" id="GO:0106430">
    <property type="term" value="F:dihydroorotate dehydrogenase (quinone) activity"/>
    <property type="evidence" value="ECO:0007669"/>
    <property type="project" value="UniProtKB-EC"/>
</dbReference>
<dbReference type="GO" id="GO:0006207">
    <property type="term" value="P:'de novo' pyrimidine nucleobase biosynthetic process"/>
    <property type="evidence" value="ECO:0007669"/>
    <property type="project" value="InterPro"/>
</dbReference>
<dbReference type="GO" id="GO:0044205">
    <property type="term" value="P:'de novo' UMP biosynthetic process"/>
    <property type="evidence" value="ECO:0007669"/>
    <property type="project" value="UniProtKB-UniRule"/>
</dbReference>
<dbReference type="CDD" id="cd04738">
    <property type="entry name" value="DHOD_2_like"/>
    <property type="match status" value="1"/>
</dbReference>
<dbReference type="FunFam" id="3.20.20.70:FF:000028">
    <property type="entry name" value="Dihydroorotate dehydrogenase (quinone)"/>
    <property type="match status" value="1"/>
</dbReference>
<dbReference type="Gene3D" id="3.20.20.70">
    <property type="entry name" value="Aldolase class I"/>
    <property type="match status" value="1"/>
</dbReference>
<dbReference type="HAMAP" id="MF_00225">
    <property type="entry name" value="DHO_dh_type2"/>
    <property type="match status" value="1"/>
</dbReference>
<dbReference type="InterPro" id="IPR013785">
    <property type="entry name" value="Aldolase_TIM"/>
</dbReference>
<dbReference type="InterPro" id="IPR050074">
    <property type="entry name" value="DHO_dehydrogenase"/>
</dbReference>
<dbReference type="InterPro" id="IPR012135">
    <property type="entry name" value="Dihydroorotate_DH_1_2"/>
</dbReference>
<dbReference type="InterPro" id="IPR005719">
    <property type="entry name" value="Dihydroorotate_DH_2"/>
</dbReference>
<dbReference type="InterPro" id="IPR005720">
    <property type="entry name" value="Dihydroorotate_DH_cat"/>
</dbReference>
<dbReference type="InterPro" id="IPR001295">
    <property type="entry name" value="Dihydroorotate_DH_CS"/>
</dbReference>
<dbReference type="NCBIfam" id="NF003644">
    <property type="entry name" value="PRK05286.1-1"/>
    <property type="match status" value="1"/>
</dbReference>
<dbReference type="NCBIfam" id="NF003645">
    <property type="entry name" value="PRK05286.1-2"/>
    <property type="match status" value="1"/>
</dbReference>
<dbReference type="NCBIfam" id="NF003646">
    <property type="entry name" value="PRK05286.1-4"/>
    <property type="match status" value="1"/>
</dbReference>
<dbReference type="NCBIfam" id="NF003652">
    <property type="entry name" value="PRK05286.2-5"/>
    <property type="match status" value="1"/>
</dbReference>
<dbReference type="NCBIfam" id="TIGR01036">
    <property type="entry name" value="pyrD_sub2"/>
    <property type="match status" value="1"/>
</dbReference>
<dbReference type="PANTHER" id="PTHR48109:SF4">
    <property type="entry name" value="DIHYDROOROTATE DEHYDROGENASE (QUINONE), MITOCHONDRIAL"/>
    <property type="match status" value="1"/>
</dbReference>
<dbReference type="PANTHER" id="PTHR48109">
    <property type="entry name" value="DIHYDROOROTATE DEHYDROGENASE (QUINONE), MITOCHONDRIAL-RELATED"/>
    <property type="match status" value="1"/>
</dbReference>
<dbReference type="Pfam" id="PF01180">
    <property type="entry name" value="DHO_dh"/>
    <property type="match status" value="1"/>
</dbReference>
<dbReference type="PIRSF" id="PIRSF000164">
    <property type="entry name" value="DHO_oxidase"/>
    <property type="match status" value="1"/>
</dbReference>
<dbReference type="SUPFAM" id="SSF51395">
    <property type="entry name" value="FMN-linked oxidoreductases"/>
    <property type="match status" value="1"/>
</dbReference>
<dbReference type="PROSITE" id="PS00911">
    <property type="entry name" value="DHODEHASE_1"/>
    <property type="match status" value="1"/>
</dbReference>
<dbReference type="PROSITE" id="PS00912">
    <property type="entry name" value="DHODEHASE_2"/>
    <property type="match status" value="1"/>
</dbReference>
<sequence length="339" mass="36919">MYALIRKALFSLDAEQAHDLTIKTLKTLGRSPFNPLLKTLFACPTGSPKTIMGLHFKNPIGLAAGADKNGEAIEGFAAMGFGFIEVGTVTPLAQEGNPKPRQFRLPEAEGIINRNGFNNYGIDYLIENVKHANYDGILGINIGKNTFTSVENGKADYLICLNKAYHYADYITINISSPNSPGLRQLQYGEALEDLLQGVKARQKDLAEQYQKYVPIAVKIAPDLTEGEVVQIADTLQRHKMDAVIATNTTISRDTVSGLQNAEQQGGLSGKPLQQKSTEIIARLHQELKGQIPIIGSGGIDSVANAQEKIKAGAELLQLYSGLIYHGPHLIKQLVQQIK</sequence>
<organism>
    <name type="scientific">Pasteurella multocida (strain Pm70)</name>
    <dbReference type="NCBI Taxonomy" id="272843"/>
    <lineage>
        <taxon>Bacteria</taxon>
        <taxon>Pseudomonadati</taxon>
        <taxon>Pseudomonadota</taxon>
        <taxon>Gammaproteobacteria</taxon>
        <taxon>Pasteurellales</taxon>
        <taxon>Pasteurellaceae</taxon>
        <taxon>Pasteurella</taxon>
    </lineage>
</organism>
<comment type="function">
    <text evidence="1">Catalyzes the conversion of dihydroorotate to orotate with quinone as electron acceptor.</text>
</comment>
<comment type="catalytic activity">
    <reaction>
        <text>(S)-dihydroorotate + a quinone = orotate + a quinol</text>
        <dbReference type="Rhea" id="RHEA:30187"/>
        <dbReference type="ChEBI" id="CHEBI:24646"/>
        <dbReference type="ChEBI" id="CHEBI:30839"/>
        <dbReference type="ChEBI" id="CHEBI:30864"/>
        <dbReference type="ChEBI" id="CHEBI:132124"/>
        <dbReference type="EC" id="1.3.5.2"/>
    </reaction>
</comment>
<comment type="cofactor">
    <cofactor evidence="1">
        <name>FMN</name>
        <dbReference type="ChEBI" id="CHEBI:58210"/>
    </cofactor>
    <text evidence="1">Binds 1 FMN per subunit.</text>
</comment>
<comment type="pathway">
    <text>Pyrimidine metabolism; UMP biosynthesis via de novo pathway; orotate from (S)-dihydroorotate (quinone route): step 1/1.</text>
</comment>
<comment type="subunit">
    <text evidence="1">Monomer.</text>
</comment>
<comment type="subcellular location">
    <subcellularLocation>
        <location evidence="1">Cell membrane</location>
        <topology evidence="1">Peripheral membrane protein</topology>
    </subcellularLocation>
</comment>
<comment type="similarity">
    <text evidence="2">Belongs to the dihydroorotate dehydrogenase family. Type 2 subfamily.</text>
</comment>
<protein>
    <recommendedName>
        <fullName>Dihydroorotate dehydrogenase (quinone)</fullName>
        <ecNumber>1.3.5.2</ecNumber>
    </recommendedName>
    <alternativeName>
        <fullName>DHOdehase</fullName>
        <shortName>DHOD</shortName>
        <shortName>DHODase</shortName>
    </alternativeName>
    <alternativeName>
        <fullName>Dihydroorotate oxidase</fullName>
    </alternativeName>
</protein>
<gene>
    <name type="primary">pyrD</name>
    <name type="ordered locus">PM0617</name>
</gene>
<reference key="1">
    <citation type="journal article" date="2001" name="Proc. Natl. Acad. Sci. U.S.A.">
        <title>Complete genomic sequence of Pasteurella multocida Pm70.</title>
        <authorList>
            <person name="May B.J."/>
            <person name="Zhang Q."/>
            <person name="Li L.L."/>
            <person name="Paustian M.L."/>
            <person name="Whittam T.S."/>
            <person name="Kapur V."/>
        </authorList>
    </citation>
    <scope>NUCLEOTIDE SEQUENCE [LARGE SCALE GENOMIC DNA]</scope>
    <source>
        <strain>Pm70</strain>
    </source>
</reference>
<evidence type="ECO:0000250" key="1"/>
<evidence type="ECO:0000305" key="2"/>
<feature type="chain" id="PRO_0000148463" description="Dihydroorotate dehydrogenase (quinone)">
    <location>
        <begin position="1"/>
        <end position="339"/>
    </location>
</feature>
<feature type="active site" description="Nucleophile" evidence="1">
    <location>
        <position position="177"/>
    </location>
</feature>
<feature type="binding site" evidence="1">
    <location>
        <begin position="64"/>
        <end position="68"/>
    </location>
    <ligand>
        <name>FMN</name>
        <dbReference type="ChEBI" id="CHEBI:58210"/>
    </ligand>
</feature>
<feature type="binding site" evidence="1">
    <location>
        <position position="68"/>
    </location>
    <ligand>
        <name>substrate</name>
    </ligand>
</feature>
<feature type="binding site" evidence="1">
    <location>
        <position position="88"/>
    </location>
    <ligand>
        <name>FMN</name>
        <dbReference type="ChEBI" id="CHEBI:58210"/>
    </ligand>
</feature>
<feature type="binding site" evidence="1">
    <location>
        <begin position="113"/>
        <end position="117"/>
    </location>
    <ligand>
        <name>substrate</name>
    </ligand>
</feature>
<feature type="binding site" evidence="1">
    <location>
        <position position="141"/>
    </location>
    <ligand>
        <name>FMN</name>
        <dbReference type="ChEBI" id="CHEBI:58210"/>
    </ligand>
</feature>
<feature type="binding site" evidence="1">
    <location>
        <position position="174"/>
    </location>
    <ligand>
        <name>FMN</name>
        <dbReference type="ChEBI" id="CHEBI:58210"/>
    </ligand>
</feature>
<feature type="binding site" evidence="1">
    <location>
        <position position="174"/>
    </location>
    <ligand>
        <name>substrate</name>
    </ligand>
</feature>
<feature type="binding site" evidence="1">
    <location>
        <position position="179"/>
    </location>
    <ligand>
        <name>substrate</name>
    </ligand>
</feature>
<feature type="binding site" evidence="1">
    <location>
        <position position="219"/>
    </location>
    <ligand>
        <name>FMN</name>
        <dbReference type="ChEBI" id="CHEBI:58210"/>
    </ligand>
</feature>
<feature type="binding site" evidence="1">
    <location>
        <position position="247"/>
    </location>
    <ligand>
        <name>FMN</name>
        <dbReference type="ChEBI" id="CHEBI:58210"/>
    </ligand>
</feature>
<feature type="binding site" evidence="1">
    <location>
        <begin position="248"/>
        <end position="249"/>
    </location>
    <ligand>
        <name>substrate</name>
    </ligand>
</feature>
<feature type="binding site" evidence="1">
    <location>
        <position position="270"/>
    </location>
    <ligand>
        <name>FMN</name>
        <dbReference type="ChEBI" id="CHEBI:58210"/>
    </ligand>
</feature>
<feature type="binding site" evidence="1">
    <location>
        <position position="299"/>
    </location>
    <ligand>
        <name>FMN</name>
        <dbReference type="ChEBI" id="CHEBI:58210"/>
    </ligand>
</feature>
<feature type="binding site" evidence="1">
    <location>
        <begin position="320"/>
        <end position="321"/>
    </location>
    <ligand>
        <name>FMN</name>
        <dbReference type="ChEBI" id="CHEBI:58210"/>
    </ligand>
</feature>